<gene>
    <name evidence="1" type="primary">ugpC</name>
    <name type="ordered locus">YE0244</name>
</gene>
<comment type="function">
    <text evidence="1">Part of the ABC transporter complex UgpBAEC involved in sn-glycerol-3-phosphate (G3P) import. Responsible for energy coupling to the transport system.</text>
</comment>
<comment type="catalytic activity">
    <reaction evidence="1">
        <text>sn-glycerol 3-phosphate(out) + ATP + H2O = sn-glycerol 3-phosphate(in) + ADP + phosphate + H(+)</text>
        <dbReference type="Rhea" id="RHEA:21668"/>
        <dbReference type="ChEBI" id="CHEBI:15377"/>
        <dbReference type="ChEBI" id="CHEBI:15378"/>
        <dbReference type="ChEBI" id="CHEBI:30616"/>
        <dbReference type="ChEBI" id="CHEBI:43474"/>
        <dbReference type="ChEBI" id="CHEBI:57597"/>
        <dbReference type="ChEBI" id="CHEBI:456216"/>
        <dbReference type="EC" id="7.6.2.10"/>
    </reaction>
</comment>
<comment type="subunit">
    <text evidence="1">The complex is composed of two ATP-binding proteins (UgpC), two transmembrane proteins (UgpA and UgpE) and a solute-binding protein (UgpB).</text>
</comment>
<comment type="subcellular location">
    <subcellularLocation>
        <location evidence="1">Cell inner membrane</location>
        <topology evidence="1">Peripheral membrane protein</topology>
    </subcellularLocation>
</comment>
<comment type="similarity">
    <text evidence="1">Belongs to the ABC transporter superfamily. sn-glycerol-3-phosphate importer (TC 3.A.1.1.3) family.</text>
</comment>
<keyword id="KW-0067">ATP-binding</keyword>
<keyword id="KW-0997">Cell inner membrane</keyword>
<keyword id="KW-1003">Cell membrane</keyword>
<keyword id="KW-0472">Membrane</keyword>
<keyword id="KW-0547">Nucleotide-binding</keyword>
<keyword id="KW-0762">Sugar transport</keyword>
<keyword id="KW-1278">Translocase</keyword>
<keyword id="KW-0813">Transport</keyword>
<reference key="1">
    <citation type="journal article" date="2006" name="PLoS Genet.">
        <title>The complete genome sequence and comparative genome analysis of the high pathogenicity Yersinia enterocolitica strain 8081.</title>
        <authorList>
            <person name="Thomson N.R."/>
            <person name="Howard S."/>
            <person name="Wren B.W."/>
            <person name="Holden M.T.G."/>
            <person name="Crossman L."/>
            <person name="Challis G.L."/>
            <person name="Churcher C."/>
            <person name="Mungall K."/>
            <person name="Brooks K."/>
            <person name="Chillingworth T."/>
            <person name="Feltwell T."/>
            <person name="Abdellah Z."/>
            <person name="Hauser H."/>
            <person name="Jagels K."/>
            <person name="Maddison M."/>
            <person name="Moule S."/>
            <person name="Sanders M."/>
            <person name="Whitehead S."/>
            <person name="Quail M.A."/>
            <person name="Dougan G."/>
            <person name="Parkhill J."/>
            <person name="Prentice M.B."/>
        </authorList>
    </citation>
    <scope>NUCLEOTIDE SEQUENCE [LARGE SCALE GENOMIC DNA]</scope>
    <source>
        <strain>NCTC 13174 / 8081</strain>
    </source>
</reference>
<organism>
    <name type="scientific">Yersinia enterocolitica serotype O:8 / biotype 1B (strain NCTC 13174 / 8081)</name>
    <dbReference type="NCBI Taxonomy" id="393305"/>
    <lineage>
        <taxon>Bacteria</taxon>
        <taxon>Pseudomonadati</taxon>
        <taxon>Pseudomonadota</taxon>
        <taxon>Gammaproteobacteria</taxon>
        <taxon>Enterobacterales</taxon>
        <taxon>Yersiniaceae</taxon>
        <taxon>Yersinia</taxon>
    </lineage>
</organism>
<accession>A1JIE0</accession>
<evidence type="ECO:0000255" key="1">
    <source>
        <dbReference type="HAMAP-Rule" id="MF_01727"/>
    </source>
</evidence>
<feature type="chain" id="PRO_0000289789" description="sn-glycerol-3-phosphate import ATP-binding protein UgpC">
    <location>
        <begin position="1"/>
        <end position="362"/>
    </location>
</feature>
<feature type="domain" description="ABC transporter" evidence="1">
    <location>
        <begin position="4"/>
        <end position="235"/>
    </location>
</feature>
<feature type="binding site" evidence="1">
    <location>
        <begin position="37"/>
        <end position="44"/>
    </location>
    <ligand>
        <name>ATP</name>
        <dbReference type="ChEBI" id="CHEBI:30616"/>
    </ligand>
</feature>
<protein>
    <recommendedName>
        <fullName evidence="1">sn-glycerol-3-phosphate import ATP-binding protein UgpC</fullName>
        <ecNumber evidence="1">7.6.2.10</ecNumber>
    </recommendedName>
</protein>
<proteinExistence type="inferred from homology"/>
<sequence>MACLKLQAVTKSYDGVTPVIKQIDLDVTDGEFIVMVGPSGCGKSTLLRMVAGLERTTSGDIYIDNLRVTDMEPKDRGIAMVFQNYALYPHMSVFDNMAYGLKIRGFGKEQIRQRVDEAARILELEPLLKRKPRELSGGQRQRVAMGRAIVREPAVFLFDEPLSNLDAKLRVQMRLELQQLHRRLKTTSLYVTHDQVEAMTLAQRVIVMNKGVAEQIGTPSEVYQRPATLFVASFIGSPAMNLLAGTVSPDGRAFILADGMTLPLEVPRPQWADRRLTLGIRPEHIQQRVSQQKTSAQGVPMTLLTLELLGADNLAHGQWGGQSVIARLSHEEMPTAGSVLYLYLPPAALHFFDSESGLRMES</sequence>
<name>UGPC_YERE8</name>
<dbReference type="EC" id="7.6.2.10" evidence="1"/>
<dbReference type="EMBL" id="AM286415">
    <property type="protein sequence ID" value="CAL10378.1"/>
    <property type="molecule type" value="Genomic_DNA"/>
</dbReference>
<dbReference type="RefSeq" id="WP_005176326.1">
    <property type="nucleotide sequence ID" value="NC_008800.1"/>
</dbReference>
<dbReference type="RefSeq" id="YP_001004630.1">
    <property type="nucleotide sequence ID" value="NC_008800.1"/>
</dbReference>
<dbReference type="SMR" id="A1JIE0"/>
<dbReference type="KEGG" id="yen:YE0244"/>
<dbReference type="PATRIC" id="fig|393305.7.peg.336"/>
<dbReference type="eggNOG" id="COG3842">
    <property type="taxonomic scope" value="Bacteria"/>
</dbReference>
<dbReference type="HOGENOM" id="CLU_000604_1_1_6"/>
<dbReference type="OrthoDB" id="9802264at2"/>
<dbReference type="Proteomes" id="UP000000642">
    <property type="component" value="Chromosome"/>
</dbReference>
<dbReference type="GO" id="GO:0055052">
    <property type="term" value="C:ATP-binding cassette (ABC) transporter complex, substrate-binding subunit-containing"/>
    <property type="evidence" value="ECO:0007669"/>
    <property type="project" value="TreeGrafter"/>
</dbReference>
<dbReference type="GO" id="GO:0015430">
    <property type="term" value="F:ABC-type glycerol-3-phosphate transporter activity"/>
    <property type="evidence" value="ECO:0007669"/>
    <property type="project" value="UniProtKB-EC"/>
</dbReference>
<dbReference type="GO" id="GO:0005524">
    <property type="term" value="F:ATP binding"/>
    <property type="evidence" value="ECO:0007669"/>
    <property type="project" value="UniProtKB-KW"/>
</dbReference>
<dbReference type="GO" id="GO:0016887">
    <property type="term" value="F:ATP hydrolysis activity"/>
    <property type="evidence" value="ECO:0007669"/>
    <property type="project" value="InterPro"/>
</dbReference>
<dbReference type="GO" id="GO:0008643">
    <property type="term" value="P:carbohydrate transport"/>
    <property type="evidence" value="ECO:0007669"/>
    <property type="project" value="InterPro"/>
</dbReference>
<dbReference type="GO" id="GO:0001407">
    <property type="term" value="P:glycerophosphodiester transmembrane transport"/>
    <property type="evidence" value="ECO:0007669"/>
    <property type="project" value="TreeGrafter"/>
</dbReference>
<dbReference type="CDD" id="cd03301">
    <property type="entry name" value="ABC_MalK_N"/>
    <property type="match status" value="1"/>
</dbReference>
<dbReference type="FunFam" id="3.40.50.300:FF:000042">
    <property type="entry name" value="Maltose/maltodextrin ABC transporter, ATP-binding protein"/>
    <property type="match status" value="1"/>
</dbReference>
<dbReference type="FunFam" id="2.40.50.100:FF:000032">
    <property type="entry name" value="sn-glycerol-3-phosphate import ATP-binding protein UgpC"/>
    <property type="match status" value="1"/>
</dbReference>
<dbReference type="Gene3D" id="2.40.50.100">
    <property type="match status" value="1"/>
</dbReference>
<dbReference type="Gene3D" id="2.40.50.140">
    <property type="entry name" value="Nucleic acid-binding proteins"/>
    <property type="match status" value="1"/>
</dbReference>
<dbReference type="Gene3D" id="3.40.50.300">
    <property type="entry name" value="P-loop containing nucleotide triphosphate hydrolases"/>
    <property type="match status" value="1"/>
</dbReference>
<dbReference type="InterPro" id="IPR003593">
    <property type="entry name" value="AAA+_ATPase"/>
</dbReference>
<dbReference type="InterPro" id="IPR003439">
    <property type="entry name" value="ABC_transporter-like_ATP-bd"/>
</dbReference>
<dbReference type="InterPro" id="IPR017871">
    <property type="entry name" value="ABC_transporter-like_CS"/>
</dbReference>
<dbReference type="InterPro" id="IPR015855">
    <property type="entry name" value="ABC_transpr_MalK-like"/>
</dbReference>
<dbReference type="InterPro" id="IPR047641">
    <property type="entry name" value="ABC_transpr_MalK/UgpC-like"/>
</dbReference>
<dbReference type="InterPro" id="IPR008995">
    <property type="entry name" value="Mo/tungstate-bd_C_term_dom"/>
</dbReference>
<dbReference type="InterPro" id="IPR012340">
    <property type="entry name" value="NA-bd_OB-fold"/>
</dbReference>
<dbReference type="InterPro" id="IPR040582">
    <property type="entry name" value="OB_MalK-like"/>
</dbReference>
<dbReference type="InterPro" id="IPR027417">
    <property type="entry name" value="P-loop_NTPase"/>
</dbReference>
<dbReference type="NCBIfam" id="NF008653">
    <property type="entry name" value="PRK11650.1"/>
    <property type="match status" value="1"/>
</dbReference>
<dbReference type="PANTHER" id="PTHR43875">
    <property type="entry name" value="MALTODEXTRIN IMPORT ATP-BINDING PROTEIN MSMX"/>
    <property type="match status" value="1"/>
</dbReference>
<dbReference type="PANTHER" id="PTHR43875:SF12">
    <property type="entry name" value="SN-GLYCEROL-3-PHOSPHATE IMPORT ATP-BINDING PROTEIN UGPC"/>
    <property type="match status" value="1"/>
</dbReference>
<dbReference type="Pfam" id="PF00005">
    <property type="entry name" value="ABC_tran"/>
    <property type="match status" value="1"/>
</dbReference>
<dbReference type="Pfam" id="PF17912">
    <property type="entry name" value="OB_MalK"/>
    <property type="match status" value="1"/>
</dbReference>
<dbReference type="SMART" id="SM00382">
    <property type="entry name" value="AAA"/>
    <property type="match status" value="1"/>
</dbReference>
<dbReference type="SUPFAM" id="SSF50331">
    <property type="entry name" value="MOP-like"/>
    <property type="match status" value="1"/>
</dbReference>
<dbReference type="SUPFAM" id="SSF52540">
    <property type="entry name" value="P-loop containing nucleoside triphosphate hydrolases"/>
    <property type="match status" value="1"/>
</dbReference>
<dbReference type="PROSITE" id="PS00211">
    <property type="entry name" value="ABC_TRANSPORTER_1"/>
    <property type="match status" value="1"/>
</dbReference>
<dbReference type="PROSITE" id="PS50893">
    <property type="entry name" value="ABC_TRANSPORTER_2"/>
    <property type="match status" value="1"/>
</dbReference>
<dbReference type="PROSITE" id="PS51315">
    <property type="entry name" value="UGPC"/>
    <property type="match status" value="1"/>
</dbReference>